<keyword id="KW-0010">Activator</keyword>
<keyword id="KW-0025">Alternative splicing</keyword>
<keyword id="KW-0238">DNA-binding</keyword>
<keyword id="KW-0539">Nucleus</keyword>
<keyword id="KW-1185">Reference proteome</keyword>
<keyword id="KW-0804">Transcription</keyword>
<keyword id="KW-0805">Transcription regulation</keyword>
<keyword id="KW-0834">Unfolded protein response</keyword>
<keyword id="KW-0843">Virulence</keyword>
<gene>
    <name evidence="9" type="primary">hacA</name>
    <name type="ORF">AFUA_3G04070</name>
</gene>
<reference key="1">
    <citation type="journal article" date="2005" name="Nature">
        <title>Genomic sequence of the pathogenic and allergenic filamentous fungus Aspergillus fumigatus.</title>
        <authorList>
            <person name="Nierman W.C."/>
            <person name="Pain A."/>
            <person name="Anderson M.J."/>
            <person name="Wortman J.R."/>
            <person name="Kim H.S."/>
            <person name="Arroyo J."/>
            <person name="Berriman M."/>
            <person name="Abe K."/>
            <person name="Archer D.B."/>
            <person name="Bermejo C."/>
            <person name="Bennett J.W."/>
            <person name="Bowyer P."/>
            <person name="Chen D."/>
            <person name="Collins M."/>
            <person name="Coulsen R."/>
            <person name="Davies R."/>
            <person name="Dyer P.S."/>
            <person name="Farman M.L."/>
            <person name="Fedorova N."/>
            <person name="Fedorova N.D."/>
            <person name="Feldblyum T.V."/>
            <person name="Fischer R."/>
            <person name="Fosker N."/>
            <person name="Fraser A."/>
            <person name="Garcia J.L."/>
            <person name="Garcia M.J."/>
            <person name="Goble A."/>
            <person name="Goldman G.H."/>
            <person name="Gomi K."/>
            <person name="Griffith-Jones S."/>
            <person name="Gwilliam R."/>
            <person name="Haas B.J."/>
            <person name="Haas H."/>
            <person name="Harris D.E."/>
            <person name="Horiuchi H."/>
            <person name="Huang J."/>
            <person name="Humphray S."/>
            <person name="Jimenez J."/>
            <person name="Keller N."/>
            <person name="Khouri H."/>
            <person name="Kitamoto K."/>
            <person name="Kobayashi T."/>
            <person name="Konzack S."/>
            <person name="Kulkarni R."/>
            <person name="Kumagai T."/>
            <person name="Lafton A."/>
            <person name="Latge J.-P."/>
            <person name="Li W."/>
            <person name="Lord A."/>
            <person name="Lu C."/>
            <person name="Majoros W.H."/>
            <person name="May G.S."/>
            <person name="Miller B.L."/>
            <person name="Mohamoud Y."/>
            <person name="Molina M."/>
            <person name="Monod M."/>
            <person name="Mouyna I."/>
            <person name="Mulligan S."/>
            <person name="Murphy L.D."/>
            <person name="O'Neil S."/>
            <person name="Paulsen I."/>
            <person name="Penalva M.A."/>
            <person name="Pertea M."/>
            <person name="Price C."/>
            <person name="Pritchard B.L."/>
            <person name="Quail M.A."/>
            <person name="Rabbinowitsch E."/>
            <person name="Rawlins N."/>
            <person name="Rajandream M.A."/>
            <person name="Reichard U."/>
            <person name="Renauld H."/>
            <person name="Robson G.D."/>
            <person name="Rodriguez de Cordoba S."/>
            <person name="Rodriguez-Pena J.M."/>
            <person name="Ronning C.M."/>
            <person name="Rutter S."/>
            <person name="Salzberg S.L."/>
            <person name="Sanchez M."/>
            <person name="Sanchez-Ferrero J.C."/>
            <person name="Saunders D."/>
            <person name="Seeger K."/>
            <person name="Squares R."/>
            <person name="Squares S."/>
            <person name="Takeuchi M."/>
            <person name="Tekaia F."/>
            <person name="Turner G."/>
            <person name="Vazquez de Aldana C.R."/>
            <person name="Weidman J."/>
            <person name="White O."/>
            <person name="Woodward J.R."/>
            <person name="Yu J.-H."/>
            <person name="Fraser C.M."/>
            <person name="Galagan J.E."/>
            <person name="Asai K."/>
            <person name="Machida M."/>
            <person name="Hall N."/>
            <person name="Barrell B.G."/>
            <person name="Denning D.W."/>
        </authorList>
    </citation>
    <scope>NUCLEOTIDE SEQUENCE [LARGE SCALE GENOMIC DNA]</scope>
    <source>
        <strain>ATCC MYA-4609 / CBS 101355 / FGSC A1100 / Af293</strain>
    </source>
</reference>
<reference key="2">
    <citation type="journal article" date="2009" name="PLoS Pathog.">
        <title>A role for the unfolded protein response (UPR) in virulence and antifungal susceptibility in Aspergillus fumigatus.</title>
        <authorList>
            <person name="Richie D.L."/>
            <person name="Hartl L."/>
            <person name="Aimanianda V."/>
            <person name="Winters M.S."/>
            <person name="Fuller K.K."/>
            <person name="Miley M.D."/>
            <person name="White S."/>
            <person name="McCarthy J.W."/>
            <person name="Latge J.P."/>
            <person name="Feldmesser M."/>
            <person name="Rhodes J.C."/>
            <person name="Askew D.S."/>
        </authorList>
    </citation>
    <scope>FUNCTION</scope>
    <scope>DISRUPTION PHENOTYPE</scope>
    <scope>ALTERNATIVE SPLICING</scope>
</reference>
<reference key="3">
    <citation type="journal article" date="2011" name="PLoS Pathog.">
        <title>HacA-independent functions of the ER stress sensor IreA synergize with the canonical UPR to influence virulence traits in Aspergillus fumigatus.</title>
        <authorList>
            <person name="Feng X."/>
            <person name="Krishnan K."/>
            <person name="Richie D.L."/>
            <person name="Aimanianda V."/>
            <person name="Hartl L."/>
            <person name="Grahl N."/>
            <person name="Powers-Fletcher M.V."/>
            <person name="Zhang M."/>
            <person name="Fuller K.K."/>
            <person name="Nierman W.C."/>
            <person name="Lu L.J."/>
            <person name="Latge J.P."/>
            <person name="Woollett L."/>
            <person name="Newman S.L."/>
            <person name="Cramer R.A. Jr."/>
            <person name="Rhodes J.C."/>
            <person name="Askew D.S."/>
        </authorList>
    </citation>
    <scope>FUNCTION</scope>
    <scope>DISRUPTION PHENOTYPE</scope>
</reference>
<reference key="4">
    <citation type="journal article" date="2011" name="Virulence">
        <title>The virulence of the opportunistic fungal pathogen Aspergillus fumigatus requires cooperation between the endoplasmic reticulum-associated degradation pathway (ERAD) and the unfolded protein response (UPR).</title>
        <authorList>
            <person name="Richie D.L."/>
            <person name="Feng X."/>
            <person name="Hartl L."/>
            <person name="Aimanianda V."/>
            <person name="Krishnan K."/>
            <person name="Powers-Fletcher M.V."/>
            <person name="Watson D.S."/>
            <person name="Galande A.K."/>
            <person name="White S.M."/>
            <person name="Willett T."/>
            <person name="Latge J.P."/>
            <person name="Rhodes J.C."/>
            <person name="Askew D.S."/>
        </authorList>
    </citation>
    <scope>FUNCTION</scope>
    <scope>DISRUPTION PHENOTYPE</scope>
</reference>
<reference key="5">
    <citation type="journal article" date="2020" name="MBio">
        <title>Functional coupling between the unfolded protein response and endoplasmic reticulum/Golgi Ca2+-ATPases promotes stress tolerance, cell wall biosynthesis, and virulence of Aspergillus fumigatus.</title>
        <authorList>
            <person name="Weichert M."/>
            <person name="Guirao-Abad J."/>
            <person name="Aimanianda V."/>
            <person name="Krishnan K."/>
            <person name="Grisham C."/>
            <person name="Snyder P."/>
            <person name="Sheehan A."/>
            <person name="Abbu R.R."/>
            <person name="Liu H."/>
            <person name="Filler S.G."/>
            <person name="Gruenstein E.I."/>
            <person name="Latge J.P."/>
            <person name="Askew D.S."/>
        </authorList>
    </citation>
    <scope>FUNCTION</scope>
    <scope>DISRUPTION PHENOTYPE</scope>
</reference>
<reference key="6">
    <citation type="journal article" date="2020" name="MSphere">
        <title>A human IRE1 inhibitor blocks the unfolded protein response in the pathogenic fungus Aspergillus fumigatus and suggests noncanonical functions within the pathway.</title>
        <authorList>
            <person name="Guirao-Abad J.P."/>
            <person name="Weichert M."/>
            <person name="Albee A."/>
            <person name="Deck K."/>
            <person name="Askew D.S."/>
        </authorList>
    </citation>
    <scope>FUNCTION</scope>
    <scope>ALTERNATIVE SPLICING</scope>
</reference>
<reference key="7">
    <citation type="journal article" date="2021" name="MBio">
        <title>Pleiotropic effects of the P5-type ATPase SpfA on stress response networks contribute to virulence in the pathogenic mold Aspergillus fumigatus.</title>
        <authorList>
            <person name="Guirao-Abad J.P."/>
            <person name="Weichert M."/>
            <person name="Luengo-Gil G."/>
            <person name="Sze Wah Wong S."/>
            <person name="Aimanianda V."/>
            <person name="Grisham C."/>
            <person name="Malev N."/>
            <person name="Reddy S."/>
            <person name="Woollett L."/>
            <person name="Askew D.S."/>
        </authorList>
    </citation>
    <scope>FUNCTION</scope>
    <scope>DISRUPTION PHENOTYPE</scope>
</reference>
<dbReference type="EMBL" id="AAHF01000010">
    <property type="protein sequence ID" value="EAL86689.1"/>
    <property type="status" value="ALT_SEQ"/>
    <property type="molecule type" value="Genomic_DNA"/>
</dbReference>
<dbReference type="RefSeq" id="XP_748727.1">
    <molecule id="Q4WEY8-2"/>
    <property type="nucleotide sequence ID" value="XM_743634.1"/>
</dbReference>
<dbReference type="SMR" id="Q4WEY8"/>
<dbReference type="STRING" id="330879.Q4WEY8"/>
<dbReference type="EnsemblFungi" id="EAL86689">
    <molecule id="Q4WEY8-2"/>
    <property type="protein sequence ID" value="EAL86689"/>
    <property type="gene ID" value="AFUA_3G04070"/>
</dbReference>
<dbReference type="GeneID" id="3506096"/>
<dbReference type="KEGG" id="afm:AFUA_3G04070"/>
<dbReference type="VEuPathDB" id="FungiDB:Afu3g04070"/>
<dbReference type="eggNOG" id="ENOG502S526">
    <property type="taxonomic scope" value="Eukaryota"/>
</dbReference>
<dbReference type="HOGENOM" id="CLU_033931_0_0_1"/>
<dbReference type="InParanoid" id="Q4WEY8"/>
<dbReference type="OMA" id="CDLQCQL"/>
<dbReference type="OrthoDB" id="674948at2759"/>
<dbReference type="Proteomes" id="UP000002530">
    <property type="component" value="Chromosome 3"/>
</dbReference>
<dbReference type="GO" id="GO:0005634">
    <property type="term" value="C:nucleus"/>
    <property type="evidence" value="ECO:0007669"/>
    <property type="project" value="UniProtKB-SubCell"/>
</dbReference>
<dbReference type="GO" id="GO:0003677">
    <property type="term" value="F:DNA binding"/>
    <property type="evidence" value="ECO:0007669"/>
    <property type="project" value="UniProtKB-KW"/>
</dbReference>
<dbReference type="GO" id="GO:0000981">
    <property type="term" value="F:DNA-binding transcription factor activity, RNA polymerase II-specific"/>
    <property type="evidence" value="ECO:0007669"/>
    <property type="project" value="InterPro"/>
</dbReference>
<dbReference type="GO" id="GO:0030968">
    <property type="term" value="P:endoplasmic reticulum unfolded protein response"/>
    <property type="evidence" value="ECO:0000315"/>
    <property type="project" value="GO_Central"/>
</dbReference>
<dbReference type="GO" id="GO:0045944">
    <property type="term" value="P:positive regulation of transcription by RNA polymerase II"/>
    <property type="evidence" value="ECO:0000315"/>
    <property type="project" value="GO_Central"/>
</dbReference>
<dbReference type="CDD" id="cd14710">
    <property type="entry name" value="bZIP_HAC1-like"/>
    <property type="match status" value="1"/>
</dbReference>
<dbReference type="FunFam" id="1.20.5.170:FF:000101">
    <property type="entry name" value="BZIP transcription factor HacA"/>
    <property type="match status" value="1"/>
</dbReference>
<dbReference type="Gene3D" id="1.20.5.170">
    <property type="match status" value="1"/>
</dbReference>
<dbReference type="InterPro" id="IPR004827">
    <property type="entry name" value="bZIP"/>
</dbReference>
<dbReference type="InterPro" id="IPR046347">
    <property type="entry name" value="bZIP_sf"/>
</dbReference>
<dbReference type="InterPro" id="IPR044280">
    <property type="entry name" value="Hac1/HY5"/>
</dbReference>
<dbReference type="PANTHER" id="PTHR46714">
    <property type="entry name" value="TRANSCRIPTIONAL ACTIVATOR HAC1"/>
    <property type="match status" value="1"/>
</dbReference>
<dbReference type="PANTHER" id="PTHR46714:SF6">
    <property type="entry name" value="TRANSCRIPTIONAL ACTIVATOR HAC1"/>
    <property type="match status" value="1"/>
</dbReference>
<dbReference type="Pfam" id="PF07716">
    <property type="entry name" value="bZIP_2"/>
    <property type="match status" value="1"/>
</dbReference>
<dbReference type="SMART" id="SM00338">
    <property type="entry name" value="BRLZ"/>
    <property type="match status" value="1"/>
</dbReference>
<dbReference type="SUPFAM" id="SSF57959">
    <property type="entry name" value="Leucine zipper domain"/>
    <property type="match status" value="1"/>
</dbReference>
<dbReference type="PROSITE" id="PS50217">
    <property type="entry name" value="BZIP"/>
    <property type="match status" value="1"/>
</dbReference>
<dbReference type="PROSITE" id="PS00036">
    <property type="entry name" value="BZIP_BASIC"/>
    <property type="match status" value="1"/>
</dbReference>
<name>HACA_ASPFU</name>
<evidence type="ECO:0000255" key="1">
    <source>
        <dbReference type="PROSITE-ProRule" id="PRU00978"/>
    </source>
</evidence>
<evidence type="ECO:0000256" key="2">
    <source>
        <dbReference type="SAM" id="MobiDB-lite"/>
    </source>
</evidence>
<evidence type="ECO:0000269" key="3">
    <source>
    </source>
</evidence>
<evidence type="ECO:0000269" key="4">
    <source>
    </source>
</evidence>
<evidence type="ECO:0000269" key="5">
    <source>
    </source>
</evidence>
<evidence type="ECO:0000269" key="6">
    <source>
    </source>
</evidence>
<evidence type="ECO:0000269" key="7">
    <source>
    </source>
</evidence>
<evidence type="ECO:0000269" key="8">
    <source>
    </source>
</evidence>
<evidence type="ECO:0000303" key="9">
    <source>
    </source>
</evidence>
<evidence type="ECO:0000305" key="10"/>
<proteinExistence type="inferred from homology"/>
<sequence>MEDNFASVVESLSGTSASALPLLTVSPADTSLKAPETKVQETKTEEKKPPKKRKSWGQELPIPKTNLPPRKRAKTEDEKEQRRIERVLRNRAAAQTSRERKRLEMEKLENEKIQMEQQNQFLLQRLSQMEAENNRLSQQLAQLTAEVRNSRNSTPKPGSPATASPTLTPTLFKQEGDELPLERIPFPTPSITDYSPTLKPSSLAESSDVTQHPAVSVGGLEGPGSALPLFDLGSGVEHDAANDIAAPLSDDDFHRLFNGDSSTEPDSSVIEDGFSFDILDSGDLSAFPFDSMVNFDSEPVALEGIEPAHGLPNETPYQTSGLQPSLGASTSRCDGQGIAAGC</sequence>
<accession>Q4WEY8</accession>
<protein>
    <recommendedName>
        <fullName evidence="9">Transcriptional regulator of the unfolded protein response hacA</fullName>
    </recommendedName>
    <alternativeName>
        <fullName evidence="9">BZIP transcription factor hacA</fullName>
    </alternativeName>
</protein>
<feature type="chain" id="PRO_0000456887" description="Transcriptional regulator of the unfolded protein response hacA">
    <location>
        <begin position="1"/>
        <end position="342"/>
    </location>
</feature>
<feature type="domain" description="bZIP" evidence="1">
    <location>
        <begin position="80"/>
        <end position="143"/>
    </location>
</feature>
<feature type="region of interest" description="Disordered" evidence="2">
    <location>
        <begin position="1"/>
        <end position="105"/>
    </location>
</feature>
<feature type="region of interest" description="Basic motif" evidence="1">
    <location>
        <begin position="82"/>
        <end position="135"/>
    </location>
</feature>
<feature type="region of interest" description="Leucine-zipper" evidence="1">
    <location>
        <begin position="136"/>
        <end position="143"/>
    </location>
</feature>
<feature type="region of interest" description="Disordered" evidence="2">
    <location>
        <begin position="146"/>
        <end position="167"/>
    </location>
</feature>
<feature type="region of interest" description="Disordered" evidence="2">
    <location>
        <begin position="306"/>
        <end position="330"/>
    </location>
</feature>
<feature type="compositionally biased region" description="Basic and acidic residues" evidence="2">
    <location>
        <begin position="35"/>
        <end position="48"/>
    </location>
</feature>
<feature type="compositionally biased region" description="Basic and acidic residues" evidence="2">
    <location>
        <begin position="74"/>
        <end position="88"/>
    </location>
</feature>
<feature type="compositionally biased region" description="Polar residues" evidence="2">
    <location>
        <begin position="315"/>
        <end position="330"/>
    </location>
</feature>
<feature type="splice variant" id="VSP_061718" description="In isoform U." evidence="3">
    <original>VSVGGLEGPGSALPLFDLGSGVEHDAANDIAAPLSDDDFHRLFNGDSSTEPDSSVIEDGFSFDILDSGDLSAFPFDSMVNFDSEPVALEGIEPAHGLPNETPYQTSGLQPSLGASTSRCDGQGIAAGC</original>
    <variation>AVLCDLQCQLADSKDLEVPSRFLTSALAWNMTLQMTLQLLFLTMTSTAYSTVIHPLSQILRSLKTGSPLTFSTQEIYQHFHLILWLISTPSLSPSKASKRPTVFRMRLLTRLLACNPALARPLRDATGRALQLAVSENVSRGTWSAGDDAGRLRWESLLTLVWAIDRFERTRGRGRILFAKFERGARRDTLGNRHRSPRSSWSSKRLSETLTSLMDKER</variation>
    <location>
        <begin position="215"/>
        <end position="342"/>
    </location>
</feature>
<organism>
    <name type="scientific">Aspergillus fumigatus (strain ATCC MYA-4609 / CBS 101355 / FGSC A1100 / Af293)</name>
    <name type="common">Neosartorya fumigata</name>
    <dbReference type="NCBI Taxonomy" id="330879"/>
    <lineage>
        <taxon>Eukaryota</taxon>
        <taxon>Fungi</taxon>
        <taxon>Dikarya</taxon>
        <taxon>Ascomycota</taxon>
        <taxon>Pezizomycotina</taxon>
        <taxon>Eurotiomycetes</taxon>
        <taxon>Eurotiomycetidae</taxon>
        <taxon>Eurotiales</taxon>
        <taxon>Aspergillaceae</taxon>
        <taxon>Aspergillus</taxon>
        <taxon>Aspergillus subgen. Fumigati</taxon>
    </lineage>
</organism>
<comment type="function">
    <text evidence="3 4 5 6 7 8">Master transcriptional regulator of the unfolded protein response (UPR) that recognizes and binds to the UPR element (UPRE) in the promoter of UPR-regulated genes (PubMed:19132084, PubMed:21217201, PubMed:22028661). In the canonical UPR pathway, the ireA RNase splices the cytoplasmic mRNA hacA, which alters the reading frame to allow translation of the bZIP transcription factor hacA (PubMed:19132084, PubMed:33087521). Induces the expression of pmrA, scrA and spfA in response to UPR (PubMed:32487759, PubMed:34663092).</text>
</comment>
<comment type="subcellular location">
    <subcellularLocation>
        <location evidence="1">Nucleus</location>
    </subcellularLocation>
</comment>
<comment type="alternative products">
    <event type="alternative splicing"/>
    <isoform>
        <id>Q4WEY8-1</id>
        <name>I</name>
        <name evidence="3 4">Induced</name>
        <sequence type="displayed"/>
    </isoform>
    <isoform>
        <id>Q4WEY8-2</id>
        <name>U</name>
        <name evidence="3 4">Uninduced</name>
        <sequence type="described" ref="VSP_061718"/>
    </isoform>
    <text evidence="3 4">Splicing occurs by a non-spliceosomal, regulated splicing mechanism. When UPR is induced, the mRNA is cleaved by bifunctional transmembrane kinase/endoribonuclease ireA.</text>
</comment>
<comment type="disruption phenotype">
    <text evidence="3 4 5 6 8">Leads to reduced capacity for protease secretion and impairs growth when challenged to assimilate nutrients from complex substrates (PubMed:19132084). In addition, exhibits increased susceptibility to antifungal agents that disrupt the membrane or cell wall and shows attenuated virulence in multiple mouse models of invasive aspergillosis (PubMed:19132084, PubMed:21217201, PubMed:22028661). Affects the expression of only a small amount of genes (PubMed:22028661). Leads to hypersensitivity to agents that block calcineurin-dependent signaling (PubMed:32487759). Impairs the UPR-dependent induction of spfA (PubMed:34663092).</text>
</comment>
<comment type="miscellaneous">
    <molecule>Isoform I</molecule>
    <text evidence="3">Induced and active isoform.</text>
</comment>
<comment type="miscellaneous">
    <molecule>Isoform U</molecule>
    <text evidence="3">Not translated. The unspliced HAC1 mRNA is stable, located in the cytoplasm, and is associated with polyribosomes, yet does not produce protein. Translational attenuation is due to basepairing of the intron with the 5'-UTR of the mRNA.</text>
</comment>
<comment type="similarity">
    <text evidence="10">Belongs to the bZIP family.</text>
</comment>
<comment type="sequence caution" evidence="10">
    <conflict type="erroneous gene model prediction">
        <sequence resource="EMBL-CDS" id="EAL86689"/>
    </conflict>
</comment>